<evidence type="ECO:0000255" key="1">
    <source>
        <dbReference type="HAMAP-Rule" id="MF_00536"/>
    </source>
</evidence>
<feature type="chain" id="PRO_0000188819" description="4-hydroxythreonine-4-phosphate dehydrogenase">
    <location>
        <begin position="1"/>
        <end position="338"/>
    </location>
</feature>
<feature type="binding site" evidence="1">
    <location>
        <position position="136"/>
    </location>
    <ligand>
        <name>substrate</name>
    </ligand>
</feature>
<feature type="binding site" evidence="1">
    <location>
        <position position="137"/>
    </location>
    <ligand>
        <name>substrate</name>
    </ligand>
</feature>
<feature type="binding site" evidence="1">
    <location>
        <position position="173"/>
    </location>
    <ligand>
        <name>a divalent metal cation</name>
        <dbReference type="ChEBI" id="CHEBI:60240"/>
        <note>ligand shared between dimeric partners</note>
    </ligand>
</feature>
<feature type="binding site" evidence="1">
    <location>
        <position position="218"/>
    </location>
    <ligand>
        <name>a divalent metal cation</name>
        <dbReference type="ChEBI" id="CHEBI:60240"/>
        <note>ligand shared between dimeric partners</note>
    </ligand>
</feature>
<feature type="binding site" evidence="1">
    <location>
        <position position="273"/>
    </location>
    <ligand>
        <name>a divalent metal cation</name>
        <dbReference type="ChEBI" id="CHEBI:60240"/>
        <note>ligand shared between dimeric partners</note>
    </ligand>
</feature>
<feature type="binding site" evidence="1">
    <location>
        <position position="281"/>
    </location>
    <ligand>
        <name>substrate</name>
    </ligand>
</feature>
<feature type="binding site" evidence="1">
    <location>
        <position position="290"/>
    </location>
    <ligand>
        <name>substrate</name>
    </ligand>
</feature>
<feature type="binding site" evidence="1">
    <location>
        <position position="299"/>
    </location>
    <ligand>
        <name>substrate</name>
    </ligand>
</feature>
<gene>
    <name evidence="1" type="primary">pdxA</name>
    <name type="ordered locus">RSc0517</name>
    <name type="ORF">RS04975</name>
</gene>
<keyword id="KW-0170">Cobalt</keyword>
<keyword id="KW-0963">Cytoplasm</keyword>
<keyword id="KW-0460">Magnesium</keyword>
<keyword id="KW-0479">Metal-binding</keyword>
<keyword id="KW-0520">NAD</keyword>
<keyword id="KW-0521">NADP</keyword>
<keyword id="KW-0560">Oxidoreductase</keyword>
<keyword id="KW-0664">Pyridoxine biosynthesis</keyword>
<keyword id="KW-1185">Reference proteome</keyword>
<keyword id="KW-0862">Zinc</keyword>
<organism>
    <name type="scientific">Ralstonia nicotianae (strain ATCC BAA-1114 / GMI1000)</name>
    <name type="common">Ralstonia solanacearum</name>
    <dbReference type="NCBI Taxonomy" id="267608"/>
    <lineage>
        <taxon>Bacteria</taxon>
        <taxon>Pseudomonadati</taxon>
        <taxon>Pseudomonadota</taxon>
        <taxon>Betaproteobacteria</taxon>
        <taxon>Burkholderiales</taxon>
        <taxon>Burkholderiaceae</taxon>
        <taxon>Ralstonia</taxon>
        <taxon>Ralstonia solanacearum species complex</taxon>
    </lineage>
</organism>
<proteinExistence type="inferred from homology"/>
<reference key="1">
    <citation type="journal article" date="2002" name="Nature">
        <title>Genome sequence of the plant pathogen Ralstonia solanacearum.</title>
        <authorList>
            <person name="Salanoubat M."/>
            <person name="Genin S."/>
            <person name="Artiguenave F."/>
            <person name="Gouzy J."/>
            <person name="Mangenot S."/>
            <person name="Arlat M."/>
            <person name="Billault A."/>
            <person name="Brottier P."/>
            <person name="Camus J.-C."/>
            <person name="Cattolico L."/>
            <person name="Chandler M."/>
            <person name="Choisne N."/>
            <person name="Claudel-Renard C."/>
            <person name="Cunnac S."/>
            <person name="Demange N."/>
            <person name="Gaspin C."/>
            <person name="Lavie M."/>
            <person name="Moisan A."/>
            <person name="Robert C."/>
            <person name="Saurin W."/>
            <person name="Schiex T."/>
            <person name="Siguier P."/>
            <person name="Thebault P."/>
            <person name="Whalen M."/>
            <person name="Wincker P."/>
            <person name="Levy M."/>
            <person name="Weissenbach J."/>
            <person name="Boucher C.A."/>
        </authorList>
    </citation>
    <scope>NUCLEOTIDE SEQUENCE [LARGE SCALE GENOMIC DNA]</scope>
    <source>
        <strain>ATCC BAA-1114 / GMI1000</strain>
    </source>
</reference>
<name>PDXA_RALN1</name>
<comment type="function">
    <text evidence="1">Catalyzes the NAD(P)-dependent oxidation of 4-(phosphooxy)-L-threonine (HTP) into 2-amino-3-oxo-4-(phosphooxy)butyric acid which spontaneously decarboxylates to form 3-amino-2-oxopropyl phosphate (AHAP).</text>
</comment>
<comment type="catalytic activity">
    <reaction evidence="1">
        <text>4-(phosphooxy)-L-threonine + NAD(+) = 3-amino-2-oxopropyl phosphate + CO2 + NADH</text>
        <dbReference type="Rhea" id="RHEA:32275"/>
        <dbReference type="ChEBI" id="CHEBI:16526"/>
        <dbReference type="ChEBI" id="CHEBI:57279"/>
        <dbReference type="ChEBI" id="CHEBI:57540"/>
        <dbReference type="ChEBI" id="CHEBI:57945"/>
        <dbReference type="ChEBI" id="CHEBI:58452"/>
        <dbReference type="EC" id="1.1.1.262"/>
    </reaction>
</comment>
<comment type="cofactor">
    <cofactor evidence="1">
        <name>Zn(2+)</name>
        <dbReference type="ChEBI" id="CHEBI:29105"/>
    </cofactor>
    <cofactor evidence="1">
        <name>Mg(2+)</name>
        <dbReference type="ChEBI" id="CHEBI:18420"/>
    </cofactor>
    <cofactor evidence="1">
        <name>Co(2+)</name>
        <dbReference type="ChEBI" id="CHEBI:48828"/>
    </cofactor>
    <text evidence="1">Binds 1 divalent metal cation per subunit. Can use ions such as Zn(2+), Mg(2+) or Co(2+).</text>
</comment>
<comment type="pathway">
    <text evidence="1">Cofactor biosynthesis; pyridoxine 5'-phosphate biosynthesis; pyridoxine 5'-phosphate from D-erythrose 4-phosphate: step 4/5.</text>
</comment>
<comment type="subunit">
    <text evidence="1">Homodimer.</text>
</comment>
<comment type="subcellular location">
    <subcellularLocation>
        <location evidence="1">Cytoplasm</location>
    </subcellularLocation>
</comment>
<comment type="miscellaneous">
    <text evidence="1">The active site is located at the dimer interface.</text>
</comment>
<comment type="similarity">
    <text evidence="1">Belongs to the PdxA family.</text>
</comment>
<accession>P58714</accession>
<dbReference type="EC" id="1.1.1.262" evidence="1"/>
<dbReference type="EMBL" id="AL646052">
    <property type="protein sequence ID" value="CAD14045.1"/>
    <property type="molecule type" value="Genomic_DNA"/>
</dbReference>
<dbReference type="RefSeq" id="WP_011000476.1">
    <property type="nucleotide sequence ID" value="NC_003295.1"/>
</dbReference>
<dbReference type="SMR" id="P58714"/>
<dbReference type="STRING" id="267608.RSc0517"/>
<dbReference type="EnsemblBacteria" id="CAD14045">
    <property type="protein sequence ID" value="CAD14045"/>
    <property type="gene ID" value="RSc0517"/>
</dbReference>
<dbReference type="KEGG" id="rso:RSc0517"/>
<dbReference type="eggNOG" id="COG1995">
    <property type="taxonomic scope" value="Bacteria"/>
</dbReference>
<dbReference type="HOGENOM" id="CLU_040168_2_0_4"/>
<dbReference type="UniPathway" id="UPA00244">
    <property type="reaction ID" value="UER00312"/>
</dbReference>
<dbReference type="Proteomes" id="UP000001436">
    <property type="component" value="Chromosome"/>
</dbReference>
<dbReference type="GO" id="GO:0005737">
    <property type="term" value="C:cytoplasm"/>
    <property type="evidence" value="ECO:0007669"/>
    <property type="project" value="UniProtKB-SubCell"/>
</dbReference>
<dbReference type="GO" id="GO:0050570">
    <property type="term" value="F:4-hydroxythreonine-4-phosphate dehydrogenase activity"/>
    <property type="evidence" value="ECO:0007669"/>
    <property type="project" value="UniProtKB-UniRule"/>
</dbReference>
<dbReference type="GO" id="GO:0050897">
    <property type="term" value="F:cobalt ion binding"/>
    <property type="evidence" value="ECO:0007669"/>
    <property type="project" value="UniProtKB-UniRule"/>
</dbReference>
<dbReference type="GO" id="GO:0000287">
    <property type="term" value="F:magnesium ion binding"/>
    <property type="evidence" value="ECO:0007669"/>
    <property type="project" value="UniProtKB-UniRule"/>
</dbReference>
<dbReference type="GO" id="GO:0051287">
    <property type="term" value="F:NAD binding"/>
    <property type="evidence" value="ECO:0007669"/>
    <property type="project" value="InterPro"/>
</dbReference>
<dbReference type="GO" id="GO:0008270">
    <property type="term" value="F:zinc ion binding"/>
    <property type="evidence" value="ECO:0007669"/>
    <property type="project" value="UniProtKB-UniRule"/>
</dbReference>
<dbReference type="GO" id="GO:0042823">
    <property type="term" value="P:pyridoxal phosphate biosynthetic process"/>
    <property type="evidence" value="ECO:0007669"/>
    <property type="project" value="UniProtKB-UniRule"/>
</dbReference>
<dbReference type="GO" id="GO:0008615">
    <property type="term" value="P:pyridoxine biosynthetic process"/>
    <property type="evidence" value="ECO:0007669"/>
    <property type="project" value="UniProtKB-UniRule"/>
</dbReference>
<dbReference type="Gene3D" id="3.40.718.10">
    <property type="entry name" value="Isopropylmalate Dehydrogenase"/>
    <property type="match status" value="1"/>
</dbReference>
<dbReference type="HAMAP" id="MF_00536">
    <property type="entry name" value="PdxA"/>
    <property type="match status" value="1"/>
</dbReference>
<dbReference type="InterPro" id="IPR037510">
    <property type="entry name" value="PdxA"/>
</dbReference>
<dbReference type="InterPro" id="IPR005255">
    <property type="entry name" value="PdxA_fam"/>
</dbReference>
<dbReference type="NCBIfam" id="TIGR00557">
    <property type="entry name" value="pdxA"/>
    <property type="match status" value="1"/>
</dbReference>
<dbReference type="NCBIfam" id="NF002520">
    <property type="entry name" value="PRK01909.1"/>
    <property type="match status" value="1"/>
</dbReference>
<dbReference type="PANTHER" id="PTHR30004">
    <property type="entry name" value="4-HYDROXYTHREONINE-4-PHOSPHATE DEHYDROGENASE"/>
    <property type="match status" value="1"/>
</dbReference>
<dbReference type="PANTHER" id="PTHR30004:SF5">
    <property type="entry name" value="4-HYDROXYTHREONINE-4-PHOSPHATE DEHYDROGENASE"/>
    <property type="match status" value="1"/>
</dbReference>
<dbReference type="Pfam" id="PF04166">
    <property type="entry name" value="PdxA"/>
    <property type="match status" value="1"/>
</dbReference>
<dbReference type="SUPFAM" id="SSF53659">
    <property type="entry name" value="Isocitrate/Isopropylmalate dehydrogenase-like"/>
    <property type="match status" value="1"/>
</dbReference>
<sequence>MLNIAITTGEPAGIGPDITVTALLRLLRQPAPRHADVRWHVIGDAALLQARADAIGLGDAWRDAAAALTVVARPLGAPVRTGVLDAANGRYVLDLLDAAIDGCLPDAAGMARYDAMVTAPVQKSTINDAGVPFTGHTEYLAERSRTPRVVMMLAGPQPAHGNAMLRVALATTHLPLREVPDAITPAVLDETLDIVQRDLRARFGMAAPRILVTGLNPHAGEAGHLGREEIEVIEPAVVRARARGIDARGPYPADTLFQPRLLADADCVLAMYHDQGLAPLKYGTFGHGVNITLGLPFVRTSVDHGTALDLAGTGRAEAGSLLEAIDTAVEMARHAAHS</sequence>
<protein>
    <recommendedName>
        <fullName evidence="1">4-hydroxythreonine-4-phosphate dehydrogenase</fullName>
        <ecNumber evidence="1">1.1.1.262</ecNumber>
    </recommendedName>
    <alternativeName>
        <fullName evidence="1">4-(phosphohydroxy)-L-threonine dehydrogenase</fullName>
    </alternativeName>
</protein>